<sequence length="412" mass="45026">MSLNIAILTTGDELVNGEMSDTNTARIAQLLGSWGYIVRESRAIGDDEVEIETALKDMSGRRDVIISTGGLGPTDDDLTARIAARAFGRRLVLNEEALAQIRRFFAEKNKEMHPRNEKQALLPQKTVILPNRLGTAPGFHLCHEQCDMFFLPGVPREMVDMLKEQVLPRLHERSGGQAPRQERILKVFGLSEPKVEEHFSQAPLPEGVELAFGVEFPFVYVKLRACGDQAGALLDRAEMHTRKVLQPFVFAVGQETLAGNVARMLTDTGLTLALAESCTGGMISQMLTDIPGASRFLERGGVTYSNAAKQDWLQVSEDILNQEGAVSKACAQAMAQGIRQAAGTDLGLAITGIAGPDGGTPDKPVGTVFLALSTTGEERVQGYRFSGDREQIRHISACMALEWLRRYLGNLY</sequence>
<proteinExistence type="inferred from homology"/>
<gene>
    <name type="ordered locus">Pcar_2403</name>
</gene>
<keyword id="KW-1185">Reference proteome</keyword>
<protein>
    <recommendedName>
        <fullName evidence="1">CinA-like protein</fullName>
    </recommendedName>
</protein>
<organism>
    <name type="scientific">Syntrophotalea carbinolica (strain DSM 2380 / NBRC 103641 / GraBd1)</name>
    <name type="common">Pelobacter carbinolicus</name>
    <dbReference type="NCBI Taxonomy" id="338963"/>
    <lineage>
        <taxon>Bacteria</taxon>
        <taxon>Pseudomonadati</taxon>
        <taxon>Thermodesulfobacteriota</taxon>
        <taxon>Desulfuromonadia</taxon>
        <taxon>Desulfuromonadales</taxon>
        <taxon>Syntrophotaleaceae</taxon>
        <taxon>Syntrophotalea</taxon>
    </lineage>
</organism>
<comment type="similarity">
    <text evidence="1">Belongs to the CinA family.</text>
</comment>
<accession>Q3A1W5</accession>
<name>CINAL_SYNC1</name>
<evidence type="ECO:0000255" key="1">
    <source>
        <dbReference type="HAMAP-Rule" id="MF_00226"/>
    </source>
</evidence>
<feature type="chain" id="PRO_0000336514" description="CinA-like protein">
    <location>
        <begin position="1"/>
        <end position="412"/>
    </location>
</feature>
<reference key="1">
    <citation type="submission" date="2005-10" db="EMBL/GenBank/DDBJ databases">
        <title>Complete sequence of Pelobacter carbinolicus DSM 2380.</title>
        <authorList>
            <person name="Copeland A."/>
            <person name="Lucas S."/>
            <person name="Lapidus A."/>
            <person name="Barry K."/>
            <person name="Detter J.C."/>
            <person name="Glavina T."/>
            <person name="Hammon N."/>
            <person name="Israni S."/>
            <person name="Pitluck S."/>
            <person name="Chertkov O."/>
            <person name="Schmutz J."/>
            <person name="Larimer F."/>
            <person name="Land M."/>
            <person name="Kyrpides N."/>
            <person name="Ivanova N."/>
            <person name="Richardson P."/>
        </authorList>
    </citation>
    <scope>NUCLEOTIDE SEQUENCE [LARGE SCALE GENOMIC DNA]</scope>
    <source>
        <strain>DSM 2380 / NBRC 103641 / GraBd1</strain>
    </source>
</reference>
<dbReference type="EMBL" id="CP000142">
    <property type="protein sequence ID" value="ABA89642.1"/>
    <property type="molecule type" value="Genomic_DNA"/>
</dbReference>
<dbReference type="RefSeq" id="WP_011342168.1">
    <property type="nucleotide sequence ID" value="NC_007498.2"/>
</dbReference>
<dbReference type="SMR" id="Q3A1W5"/>
<dbReference type="STRING" id="338963.Pcar_2403"/>
<dbReference type="KEGG" id="pca:Pcar_2403"/>
<dbReference type="eggNOG" id="COG1058">
    <property type="taxonomic scope" value="Bacteria"/>
</dbReference>
<dbReference type="eggNOG" id="COG1546">
    <property type="taxonomic scope" value="Bacteria"/>
</dbReference>
<dbReference type="HOGENOM" id="CLU_030805_9_2_7"/>
<dbReference type="Proteomes" id="UP000002534">
    <property type="component" value="Chromosome"/>
</dbReference>
<dbReference type="CDD" id="cd00885">
    <property type="entry name" value="cinA"/>
    <property type="match status" value="1"/>
</dbReference>
<dbReference type="Gene3D" id="3.90.950.20">
    <property type="entry name" value="CinA-like"/>
    <property type="match status" value="1"/>
</dbReference>
<dbReference type="Gene3D" id="3.40.980.10">
    <property type="entry name" value="MoaB/Mog-like domain"/>
    <property type="match status" value="1"/>
</dbReference>
<dbReference type="HAMAP" id="MF_00226_B">
    <property type="entry name" value="CinA_B"/>
    <property type="match status" value="1"/>
</dbReference>
<dbReference type="InterPro" id="IPR050101">
    <property type="entry name" value="CinA"/>
</dbReference>
<dbReference type="InterPro" id="IPR036653">
    <property type="entry name" value="CinA-like_C"/>
</dbReference>
<dbReference type="InterPro" id="IPR008136">
    <property type="entry name" value="CinA_C"/>
</dbReference>
<dbReference type="InterPro" id="IPR008135">
    <property type="entry name" value="Competence-induced_CinA"/>
</dbReference>
<dbReference type="InterPro" id="IPR036425">
    <property type="entry name" value="MoaB/Mog-like_dom_sf"/>
</dbReference>
<dbReference type="InterPro" id="IPR001453">
    <property type="entry name" value="MoaB/Mog_dom"/>
</dbReference>
<dbReference type="NCBIfam" id="TIGR00200">
    <property type="entry name" value="cinA_nterm"/>
    <property type="match status" value="1"/>
</dbReference>
<dbReference type="NCBIfam" id="TIGR00177">
    <property type="entry name" value="molyb_syn"/>
    <property type="match status" value="1"/>
</dbReference>
<dbReference type="NCBIfam" id="TIGR00199">
    <property type="entry name" value="PncC_domain"/>
    <property type="match status" value="1"/>
</dbReference>
<dbReference type="NCBIfam" id="NF001813">
    <property type="entry name" value="PRK00549.1"/>
    <property type="match status" value="1"/>
</dbReference>
<dbReference type="PANTHER" id="PTHR13939">
    <property type="entry name" value="NICOTINAMIDE-NUCLEOTIDE AMIDOHYDROLASE PNCC"/>
    <property type="match status" value="1"/>
</dbReference>
<dbReference type="PANTHER" id="PTHR13939:SF0">
    <property type="entry name" value="NMN AMIDOHYDROLASE-LIKE PROTEIN YFAY"/>
    <property type="match status" value="1"/>
</dbReference>
<dbReference type="Pfam" id="PF02464">
    <property type="entry name" value="CinA"/>
    <property type="match status" value="1"/>
</dbReference>
<dbReference type="Pfam" id="PF00994">
    <property type="entry name" value="MoCF_biosynth"/>
    <property type="match status" value="1"/>
</dbReference>
<dbReference type="PIRSF" id="PIRSF006728">
    <property type="entry name" value="CinA"/>
    <property type="match status" value="1"/>
</dbReference>
<dbReference type="SMART" id="SM00852">
    <property type="entry name" value="MoCF_biosynth"/>
    <property type="match status" value="1"/>
</dbReference>
<dbReference type="SUPFAM" id="SSF142433">
    <property type="entry name" value="CinA-like"/>
    <property type="match status" value="1"/>
</dbReference>
<dbReference type="SUPFAM" id="SSF53218">
    <property type="entry name" value="Molybdenum cofactor biosynthesis proteins"/>
    <property type="match status" value="1"/>
</dbReference>